<protein>
    <recommendedName>
        <fullName evidence="1">Translation initiation factor IF-1</fullName>
    </recommendedName>
</protein>
<gene>
    <name evidence="1" type="primary">infA</name>
    <name type="ordered locus">BruAb1_0277</name>
</gene>
<keyword id="KW-0963">Cytoplasm</keyword>
<keyword id="KW-0396">Initiation factor</keyword>
<keyword id="KW-0648">Protein biosynthesis</keyword>
<keyword id="KW-0694">RNA-binding</keyword>
<keyword id="KW-0699">rRNA-binding</keyword>
<dbReference type="EMBL" id="AE017223">
    <property type="protein sequence ID" value="AAX73682.1"/>
    <property type="molecule type" value="Genomic_DNA"/>
</dbReference>
<dbReference type="RefSeq" id="WP_002965531.1">
    <property type="nucleotide sequence ID" value="NC_006932.1"/>
</dbReference>
<dbReference type="SMR" id="P0C108"/>
<dbReference type="EnsemblBacteria" id="AAX73682">
    <property type="protein sequence ID" value="AAX73682"/>
    <property type="gene ID" value="BruAb1_0277"/>
</dbReference>
<dbReference type="GeneID" id="97534350"/>
<dbReference type="KEGG" id="bmb:BruAb1_0277"/>
<dbReference type="HOGENOM" id="CLU_151267_1_0_5"/>
<dbReference type="Proteomes" id="UP000000540">
    <property type="component" value="Chromosome I"/>
</dbReference>
<dbReference type="GO" id="GO:0005829">
    <property type="term" value="C:cytosol"/>
    <property type="evidence" value="ECO:0007669"/>
    <property type="project" value="TreeGrafter"/>
</dbReference>
<dbReference type="GO" id="GO:0043022">
    <property type="term" value="F:ribosome binding"/>
    <property type="evidence" value="ECO:0007669"/>
    <property type="project" value="UniProtKB-UniRule"/>
</dbReference>
<dbReference type="GO" id="GO:0019843">
    <property type="term" value="F:rRNA binding"/>
    <property type="evidence" value="ECO:0007669"/>
    <property type="project" value="UniProtKB-UniRule"/>
</dbReference>
<dbReference type="GO" id="GO:0003743">
    <property type="term" value="F:translation initiation factor activity"/>
    <property type="evidence" value="ECO:0007669"/>
    <property type="project" value="UniProtKB-UniRule"/>
</dbReference>
<dbReference type="CDD" id="cd04451">
    <property type="entry name" value="S1_IF1"/>
    <property type="match status" value="1"/>
</dbReference>
<dbReference type="FunFam" id="2.40.50.140:FF:000002">
    <property type="entry name" value="Translation initiation factor IF-1"/>
    <property type="match status" value="1"/>
</dbReference>
<dbReference type="Gene3D" id="2.40.50.140">
    <property type="entry name" value="Nucleic acid-binding proteins"/>
    <property type="match status" value="1"/>
</dbReference>
<dbReference type="HAMAP" id="MF_00075">
    <property type="entry name" value="IF_1"/>
    <property type="match status" value="1"/>
</dbReference>
<dbReference type="InterPro" id="IPR012340">
    <property type="entry name" value="NA-bd_OB-fold"/>
</dbReference>
<dbReference type="InterPro" id="IPR006196">
    <property type="entry name" value="RNA-binding_domain_S1_IF1"/>
</dbReference>
<dbReference type="InterPro" id="IPR003029">
    <property type="entry name" value="S1_domain"/>
</dbReference>
<dbReference type="InterPro" id="IPR004368">
    <property type="entry name" value="TIF_IF1"/>
</dbReference>
<dbReference type="NCBIfam" id="TIGR00008">
    <property type="entry name" value="infA"/>
    <property type="match status" value="1"/>
</dbReference>
<dbReference type="PANTHER" id="PTHR33370">
    <property type="entry name" value="TRANSLATION INITIATION FACTOR IF-1, CHLOROPLASTIC"/>
    <property type="match status" value="1"/>
</dbReference>
<dbReference type="PANTHER" id="PTHR33370:SF1">
    <property type="entry name" value="TRANSLATION INITIATION FACTOR IF-1, CHLOROPLASTIC"/>
    <property type="match status" value="1"/>
</dbReference>
<dbReference type="Pfam" id="PF01176">
    <property type="entry name" value="eIF-1a"/>
    <property type="match status" value="1"/>
</dbReference>
<dbReference type="SMART" id="SM00316">
    <property type="entry name" value="S1"/>
    <property type="match status" value="1"/>
</dbReference>
<dbReference type="SUPFAM" id="SSF50249">
    <property type="entry name" value="Nucleic acid-binding proteins"/>
    <property type="match status" value="1"/>
</dbReference>
<dbReference type="PROSITE" id="PS50832">
    <property type="entry name" value="S1_IF1_TYPE"/>
    <property type="match status" value="1"/>
</dbReference>
<reference key="1">
    <citation type="journal article" date="2005" name="J. Bacteriol.">
        <title>Completion of the genome sequence of Brucella abortus and comparison to the highly similar genomes of Brucella melitensis and Brucella suis.</title>
        <authorList>
            <person name="Halling S.M."/>
            <person name="Peterson-Burch B.D."/>
            <person name="Bricker B.J."/>
            <person name="Zuerner R.L."/>
            <person name="Qing Z."/>
            <person name="Li L.-L."/>
            <person name="Kapur V."/>
            <person name="Alt D.P."/>
            <person name="Olsen S.C."/>
        </authorList>
    </citation>
    <scope>NUCLEOTIDE SEQUENCE [LARGE SCALE GENOMIC DNA]</scope>
    <source>
        <strain>9-941</strain>
    </source>
</reference>
<accession>P0C108</accession>
<accession>P62922</accession>
<accession>Q57FA2</accession>
<accession>Q8YF56</accession>
<accession>Q9ACA6</accession>
<feature type="chain" id="PRO_0000095752" description="Translation initiation factor IF-1">
    <location>
        <begin position="1"/>
        <end position="72"/>
    </location>
</feature>
<feature type="domain" description="S1-like" evidence="1">
    <location>
        <begin position="1"/>
        <end position="72"/>
    </location>
</feature>
<proteinExistence type="inferred from homology"/>
<evidence type="ECO:0000255" key="1">
    <source>
        <dbReference type="HAMAP-Rule" id="MF_00075"/>
    </source>
</evidence>
<organism>
    <name type="scientific">Brucella abortus biovar 1 (strain 9-941)</name>
    <dbReference type="NCBI Taxonomy" id="262698"/>
    <lineage>
        <taxon>Bacteria</taxon>
        <taxon>Pseudomonadati</taxon>
        <taxon>Pseudomonadota</taxon>
        <taxon>Alphaproteobacteria</taxon>
        <taxon>Hyphomicrobiales</taxon>
        <taxon>Brucellaceae</taxon>
        <taxon>Brucella/Ochrobactrum group</taxon>
        <taxon>Brucella</taxon>
    </lineage>
</organism>
<name>IF1_BRUAB</name>
<comment type="function">
    <text evidence="1">One of the essential components for the initiation of protein synthesis. Stabilizes the binding of IF-2 and IF-3 on the 30S subunit to which N-formylmethionyl-tRNA(fMet) subsequently binds. Helps modulate mRNA selection, yielding the 30S pre-initiation complex (PIC). Upon addition of the 50S ribosomal subunit IF-1, IF-2 and IF-3 are released leaving the mature 70S translation initiation complex.</text>
</comment>
<comment type="subunit">
    <text evidence="1">Component of the 30S ribosomal translation pre-initiation complex which assembles on the 30S ribosome in the order IF-2 and IF-3, IF-1 and N-formylmethionyl-tRNA(fMet); mRNA recruitment can occur at any time during PIC assembly.</text>
</comment>
<comment type="subcellular location">
    <subcellularLocation>
        <location evidence="1">Cytoplasm</location>
    </subcellularLocation>
</comment>
<comment type="similarity">
    <text evidence="1">Belongs to the IF-1 family.</text>
</comment>
<sequence length="72" mass="8372">MAKEEVLEFPGVVTELLPNAMFRVKLENEHEIIAHTAGRMRKNRIRVLAGDKVLVEMTPYDLTKGRITYRFK</sequence>